<proteinExistence type="inferred from homology"/>
<organism>
    <name type="scientific">Alkalilimnicola ehrlichii (strain ATCC BAA-1101 / DSM 17681 / MLHE-1)</name>
    <dbReference type="NCBI Taxonomy" id="187272"/>
    <lineage>
        <taxon>Bacteria</taxon>
        <taxon>Pseudomonadati</taxon>
        <taxon>Pseudomonadota</taxon>
        <taxon>Gammaproteobacteria</taxon>
        <taxon>Chromatiales</taxon>
        <taxon>Ectothiorhodospiraceae</taxon>
        <taxon>Alkalilimnicola</taxon>
    </lineage>
</organism>
<comment type="function">
    <text evidence="1">Binds directly to 23S ribosomal RNA and is necessary for the in vitro assembly process of the 50S ribosomal subunit. It is not involved in the protein synthesizing functions of that subunit.</text>
</comment>
<comment type="similarity">
    <text evidence="1">Belongs to the bacterial ribosomal protein bL20 family.</text>
</comment>
<dbReference type="EMBL" id="CP000453">
    <property type="protein sequence ID" value="ABI56119.1"/>
    <property type="molecule type" value="Genomic_DNA"/>
</dbReference>
<dbReference type="RefSeq" id="WP_011628514.1">
    <property type="nucleotide sequence ID" value="NC_008340.1"/>
</dbReference>
<dbReference type="SMR" id="Q0AAL8"/>
<dbReference type="KEGG" id="aeh:Mlg_0765"/>
<dbReference type="eggNOG" id="COG0292">
    <property type="taxonomic scope" value="Bacteria"/>
</dbReference>
<dbReference type="HOGENOM" id="CLU_123265_0_1_6"/>
<dbReference type="OrthoDB" id="9808966at2"/>
<dbReference type="Proteomes" id="UP000001962">
    <property type="component" value="Chromosome"/>
</dbReference>
<dbReference type="GO" id="GO:1990904">
    <property type="term" value="C:ribonucleoprotein complex"/>
    <property type="evidence" value="ECO:0007669"/>
    <property type="project" value="UniProtKB-KW"/>
</dbReference>
<dbReference type="GO" id="GO:0005840">
    <property type="term" value="C:ribosome"/>
    <property type="evidence" value="ECO:0007669"/>
    <property type="project" value="UniProtKB-KW"/>
</dbReference>
<dbReference type="GO" id="GO:0019843">
    <property type="term" value="F:rRNA binding"/>
    <property type="evidence" value="ECO:0007669"/>
    <property type="project" value="UniProtKB-UniRule"/>
</dbReference>
<dbReference type="GO" id="GO:0003735">
    <property type="term" value="F:structural constituent of ribosome"/>
    <property type="evidence" value="ECO:0007669"/>
    <property type="project" value="InterPro"/>
</dbReference>
<dbReference type="GO" id="GO:0000027">
    <property type="term" value="P:ribosomal large subunit assembly"/>
    <property type="evidence" value="ECO:0007669"/>
    <property type="project" value="UniProtKB-UniRule"/>
</dbReference>
<dbReference type="GO" id="GO:0006412">
    <property type="term" value="P:translation"/>
    <property type="evidence" value="ECO:0007669"/>
    <property type="project" value="InterPro"/>
</dbReference>
<dbReference type="CDD" id="cd07026">
    <property type="entry name" value="Ribosomal_L20"/>
    <property type="match status" value="1"/>
</dbReference>
<dbReference type="FunFam" id="1.10.1900.20:FF:000001">
    <property type="entry name" value="50S ribosomal protein L20"/>
    <property type="match status" value="1"/>
</dbReference>
<dbReference type="Gene3D" id="6.10.160.10">
    <property type="match status" value="1"/>
</dbReference>
<dbReference type="Gene3D" id="1.10.1900.20">
    <property type="entry name" value="Ribosomal protein L20"/>
    <property type="match status" value="1"/>
</dbReference>
<dbReference type="HAMAP" id="MF_00382">
    <property type="entry name" value="Ribosomal_bL20"/>
    <property type="match status" value="1"/>
</dbReference>
<dbReference type="InterPro" id="IPR005813">
    <property type="entry name" value="Ribosomal_bL20"/>
</dbReference>
<dbReference type="InterPro" id="IPR049946">
    <property type="entry name" value="RIBOSOMAL_L20_CS"/>
</dbReference>
<dbReference type="InterPro" id="IPR035566">
    <property type="entry name" value="Ribosomal_protein_bL20_C"/>
</dbReference>
<dbReference type="NCBIfam" id="TIGR01032">
    <property type="entry name" value="rplT_bact"/>
    <property type="match status" value="1"/>
</dbReference>
<dbReference type="PANTHER" id="PTHR10986">
    <property type="entry name" value="39S RIBOSOMAL PROTEIN L20"/>
    <property type="match status" value="1"/>
</dbReference>
<dbReference type="Pfam" id="PF00453">
    <property type="entry name" value="Ribosomal_L20"/>
    <property type="match status" value="1"/>
</dbReference>
<dbReference type="PRINTS" id="PR00062">
    <property type="entry name" value="RIBOSOMALL20"/>
</dbReference>
<dbReference type="SUPFAM" id="SSF74731">
    <property type="entry name" value="Ribosomal protein L20"/>
    <property type="match status" value="1"/>
</dbReference>
<dbReference type="PROSITE" id="PS00937">
    <property type="entry name" value="RIBOSOMAL_L20"/>
    <property type="match status" value="1"/>
</dbReference>
<name>RL20_ALKEH</name>
<protein>
    <recommendedName>
        <fullName evidence="1">Large ribosomal subunit protein bL20</fullName>
    </recommendedName>
    <alternativeName>
        <fullName evidence="2">50S ribosomal protein L20</fullName>
    </alternativeName>
</protein>
<gene>
    <name evidence="1" type="primary">rplT</name>
    <name type="ordered locus">Mlg_0765</name>
</gene>
<accession>Q0AAL8</accession>
<reference key="1">
    <citation type="submission" date="2006-08" db="EMBL/GenBank/DDBJ databases">
        <title>Complete sequence of Alkalilimnicola ehrilichei MLHE-1.</title>
        <authorList>
            <person name="Copeland A."/>
            <person name="Lucas S."/>
            <person name="Lapidus A."/>
            <person name="Barry K."/>
            <person name="Detter J.C."/>
            <person name="Glavina del Rio T."/>
            <person name="Hammon N."/>
            <person name="Israni S."/>
            <person name="Dalin E."/>
            <person name="Tice H."/>
            <person name="Pitluck S."/>
            <person name="Sims D."/>
            <person name="Brettin T."/>
            <person name="Bruce D."/>
            <person name="Han C."/>
            <person name="Tapia R."/>
            <person name="Gilna P."/>
            <person name="Schmutz J."/>
            <person name="Larimer F."/>
            <person name="Land M."/>
            <person name="Hauser L."/>
            <person name="Kyrpides N."/>
            <person name="Mikhailova N."/>
            <person name="Oremland R.S."/>
            <person name="Hoeft S.E."/>
            <person name="Switzer-Blum J."/>
            <person name="Kulp T."/>
            <person name="King G."/>
            <person name="Tabita R."/>
            <person name="Witte B."/>
            <person name="Santini J.M."/>
            <person name="Basu P."/>
            <person name="Hollibaugh J.T."/>
            <person name="Xie G."/>
            <person name="Stolz J.F."/>
            <person name="Richardson P."/>
        </authorList>
    </citation>
    <scope>NUCLEOTIDE SEQUENCE [LARGE SCALE GENOMIC DNA]</scope>
    <source>
        <strain>ATCC BAA-1101 / DSM 17681 / MLHE-1</strain>
    </source>
</reference>
<keyword id="KW-1185">Reference proteome</keyword>
<keyword id="KW-0687">Ribonucleoprotein</keyword>
<keyword id="KW-0689">Ribosomal protein</keyword>
<keyword id="KW-0694">RNA-binding</keyword>
<keyword id="KW-0699">rRNA-binding</keyword>
<sequence>MSRVKRGVTARAKHNKVLKKAKGYYGARRKSFRIARQAVIKSGQYAYRDRRQRKRQFRALWIQRINAGARQHGLSYSRFINGLQQAGVDLDRKVLADLAVNDKAAFGALAEKAREALAA</sequence>
<feature type="chain" id="PRO_1000048923" description="Large ribosomal subunit protein bL20">
    <location>
        <begin position="1"/>
        <end position="119"/>
    </location>
</feature>
<evidence type="ECO:0000255" key="1">
    <source>
        <dbReference type="HAMAP-Rule" id="MF_00382"/>
    </source>
</evidence>
<evidence type="ECO:0000305" key="2"/>